<name>RL27_SYNS9</name>
<protein>
    <recommendedName>
        <fullName evidence="1">Large ribosomal subunit protein bL27</fullName>
    </recommendedName>
    <alternativeName>
        <fullName evidence="3">50S ribosomal protein L27</fullName>
    </alternativeName>
</protein>
<comment type="similarity">
    <text evidence="1">Belongs to the bacterial ribosomal protein bL27 family.</text>
</comment>
<organism>
    <name type="scientific">Synechococcus sp. (strain CC9902)</name>
    <dbReference type="NCBI Taxonomy" id="316279"/>
    <lineage>
        <taxon>Bacteria</taxon>
        <taxon>Bacillati</taxon>
        <taxon>Cyanobacteriota</taxon>
        <taxon>Cyanophyceae</taxon>
        <taxon>Synechococcales</taxon>
        <taxon>Synechococcaceae</taxon>
        <taxon>Synechococcus</taxon>
    </lineage>
</organism>
<evidence type="ECO:0000255" key="1">
    <source>
        <dbReference type="HAMAP-Rule" id="MF_00539"/>
    </source>
</evidence>
<evidence type="ECO:0000256" key="2">
    <source>
        <dbReference type="SAM" id="MobiDB-lite"/>
    </source>
</evidence>
<evidence type="ECO:0000305" key="3"/>
<feature type="chain" id="PRO_1000017635" description="Large ribosomal subunit protein bL27">
    <location>
        <begin position="1"/>
        <end position="88"/>
    </location>
</feature>
<feature type="region of interest" description="Disordered" evidence="2">
    <location>
        <begin position="1"/>
        <end position="23"/>
    </location>
</feature>
<proteinExistence type="inferred from homology"/>
<reference key="1">
    <citation type="submission" date="2005-08" db="EMBL/GenBank/DDBJ databases">
        <title>Complete sequence of Synechococcus sp. CC9902.</title>
        <authorList>
            <person name="Copeland A."/>
            <person name="Lucas S."/>
            <person name="Lapidus A."/>
            <person name="Barry K."/>
            <person name="Detter J.C."/>
            <person name="Glavina T."/>
            <person name="Hammon N."/>
            <person name="Israni S."/>
            <person name="Pitluck S."/>
            <person name="Martinez M."/>
            <person name="Schmutz J."/>
            <person name="Larimer F."/>
            <person name="Land M."/>
            <person name="Kyrpides N."/>
            <person name="Ivanova N."/>
            <person name="Richardson P."/>
        </authorList>
    </citation>
    <scope>NUCLEOTIDE SEQUENCE [LARGE SCALE GENOMIC DNA]</scope>
    <source>
        <strain>CC9902</strain>
    </source>
</reference>
<dbReference type="EMBL" id="CP000097">
    <property type="protein sequence ID" value="ABB25513.1"/>
    <property type="molecule type" value="Genomic_DNA"/>
</dbReference>
<dbReference type="RefSeq" id="WP_011359360.1">
    <property type="nucleotide sequence ID" value="NC_007513.1"/>
</dbReference>
<dbReference type="SMR" id="Q3AZG4"/>
<dbReference type="STRING" id="316279.Syncc9902_0545"/>
<dbReference type="KEGG" id="sye:Syncc9902_0545"/>
<dbReference type="eggNOG" id="COG0211">
    <property type="taxonomic scope" value="Bacteria"/>
</dbReference>
<dbReference type="HOGENOM" id="CLU_095424_4_0_3"/>
<dbReference type="OrthoDB" id="9803474at2"/>
<dbReference type="Proteomes" id="UP000002712">
    <property type="component" value="Chromosome"/>
</dbReference>
<dbReference type="GO" id="GO:0022625">
    <property type="term" value="C:cytosolic large ribosomal subunit"/>
    <property type="evidence" value="ECO:0007669"/>
    <property type="project" value="TreeGrafter"/>
</dbReference>
<dbReference type="GO" id="GO:0003735">
    <property type="term" value="F:structural constituent of ribosome"/>
    <property type="evidence" value="ECO:0007669"/>
    <property type="project" value="InterPro"/>
</dbReference>
<dbReference type="GO" id="GO:0006412">
    <property type="term" value="P:translation"/>
    <property type="evidence" value="ECO:0007669"/>
    <property type="project" value="UniProtKB-UniRule"/>
</dbReference>
<dbReference type="FunFam" id="2.40.50.100:FF:000020">
    <property type="entry name" value="50S ribosomal protein L27"/>
    <property type="match status" value="1"/>
</dbReference>
<dbReference type="Gene3D" id="2.40.50.100">
    <property type="match status" value="1"/>
</dbReference>
<dbReference type="HAMAP" id="MF_00539">
    <property type="entry name" value="Ribosomal_bL27"/>
    <property type="match status" value="1"/>
</dbReference>
<dbReference type="InterPro" id="IPR001684">
    <property type="entry name" value="Ribosomal_bL27"/>
</dbReference>
<dbReference type="InterPro" id="IPR018261">
    <property type="entry name" value="Ribosomal_bL27_CS"/>
</dbReference>
<dbReference type="NCBIfam" id="TIGR00062">
    <property type="entry name" value="L27"/>
    <property type="match status" value="1"/>
</dbReference>
<dbReference type="PANTHER" id="PTHR15893:SF0">
    <property type="entry name" value="LARGE RIBOSOMAL SUBUNIT PROTEIN BL27M"/>
    <property type="match status" value="1"/>
</dbReference>
<dbReference type="PANTHER" id="PTHR15893">
    <property type="entry name" value="RIBOSOMAL PROTEIN L27"/>
    <property type="match status" value="1"/>
</dbReference>
<dbReference type="Pfam" id="PF01016">
    <property type="entry name" value="Ribosomal_L27"/>
    <property type="match status" value="1"/>
</dbReference>
<dbReference type="PRINTS" id="PR00063">
    <property type="entry name" value="RIBOSOMALL27"/>
</dbReference>
<dbReference type="SUPFAM" id="SSF110324">
    <property type="entry name" value="Ribosomal L27 protein-like"/>
    <property type="match status" value="1"/>
</dbReference>
<dbReference type="PROSITE" id="PS00831">
    <property type="entry name" value="RIBOSOMAL_L27"/>
    <property type="match status" value="1"/>
</dbReference>
<sequence>MAHKKGTGSTRNGRDSNSKRLGVKAFGGESVTAGSILIRQRGTSVLPGVNVGKGKDDTLFALTDGFVKFESIKRGLRNRKRINITAAV</sequence>
<keyword id="KW-1185">Reference proteome</keyword>
<keyword id="KW-0687">Ribonucleoprotein</keyword>
<keyword id="KW-0689">Ribosomal protein</keyword>
<accession>Q3AZG4</accession>
<gene>
    <name evidence="1" type="primary">rpmA</name>
    <name evidence="1" type="synonym">rpl27</name>
    <name type="ordered locus">Syncc9902_0545</name>
</gene>